<proteinExistence type="inferred from homology"/>
<gene>
    <name evidence="1" type="primary">pnp</name>
    <name type="ordered locus">CLM_2705</name>
</gene>
<accession>C1FS53</accession>
<name>PNP_CLOBJ</name>
<feature type="chain" id="PRO_1000185729" description="Polyribonucleotide nucleotidyltransferase">
    <location>
        <begin position="1"/>
        <end position="702"/>
    </location>
</feature>
<feature type="domain" description="KH" evidence="1">
    <location>
        <begin position="552"/>
        <end position="612"/>
    </location>
</feature>
<feature type="domain" description="S1 motif" evidence="1">
    <location>
        <begin position="622"/>
        <end position="690"/>
    </location>
</feature>
<feature type="binding site" evidence="1">
    <location>
        <position position="485"/>
    </location>
    <ligand>
        <name>Mg(2+)</name>
        <dbReference type="ChEBI" id="CHEBI:18420"/>
    </ligand>
</feature>
<feature type="binding site" evidence="1">
    <location>
        <position position="491"/>
    </location>
    <ligand>
        <name>Mg(2+)</name>
        <dbReference type="ChEBI" id="CHEBI:18420"/>
    </ligand>
</feature>
<sequence>MIHTLETTVAGRKMKVDFGKTGMLSNAAIFMSYGDTVVMINANASKAPREGIDFFPLSVDYEERLYSVGKIPGGFIKREGKPSDKSILHARSIDRPLRPLFPKGYRNDVQIVNTVLSVEQDNLPEILAINGSSLALCLSSIPFTTPVAAVSVGLVDGEFIINPTVAQRENTILDLTVCATKERVMMVEAGGQEIDEETMYSAIMFGFQECKNIVAFQEEAVAKFGKTKNEPILYKADEEVEKEVKEFAFDMIKEVMYIMDKDERNAQLDKVKEKISEEFSEKYEDKKADIAEVIYKTQKEVVRNMLLNENRRPDGRSFDEVRPISCEVGILPRTHGTGLFTRGLTQVMTVATLGALGDVQILDGIAEEASKRYMHHYNFPSYSVGEVRPLRGPGRREIGHGALAERALEPLIPSEEEFPYTIRLVSEVLSSNGSTSQASVCGSTLALLDAGVPIKRPAAGIAMGLITSDDLEKEKVITDIQGIEDFFGDMDFKVAGTEKGITSIQFDTKIAGLSDNCVRDALEGAKKARLHILGKIKECIPEPRKELSKYAPRTEIICIDPEKIRDVIGAGGKIINKIIADTNVKIEIKEDGKIFVTSNNEPEGVKKAISIIEGLTKEVVQGEIYLGKVTKTTNFGAFVEILPGKEGLVHISKLDFARVEKVEDVVSVGDEILVKVTDIDNQGRINLSRKDAIAKKEEEKDK</sequence>
<reference key="1">
    <citation type="submission" date="2008-10" db="EMBL/GenBank/DDBJ databases">
        <title>Genome sequence of Clostridium botulinum A2 Kyoto.</title>
        <authorList>
            <person name="Shrivastava S."/>
            <person name="Brinkac L.M."/>
            <person name="Brown J.L."/>
            <person name="Bruce D."/>
            <person name="Detter C.C."/>
            <person name="Johnson E.A."/>
            <person name="Munk C.A."/>
            <person name="Smith L.A."/>
            <person name="Smith T.J."/>
            <person name="Sutton G."/>
            <person name="Brettin T.S."/>
        </authorList>
    </citation>
    <scope>NUCLEOTIDE SEQUENCE [LARGE SCALE GENOMIC DNA]</scope>
    <source>
        <strain>Kyoto / Type A2</strain>
    </source>
</reference>
<protein>
    <recommendedName>
        <fullName evidence="1">Polyribonucleotide nucleotidyltransferase</fullName>
        <ecNumber evidence="1">2.7.7.8</ecNumber>
    </recommendedName>
    <alternativeName>
        <fullName evidence="1">Polynucleotide phosphorylase</fullName>
        <shortName evidence="1">PNPase</shortName>
    </alternativeName>
</protein>
<dbReference type="EC" id="2.7.7.8" evidence="1"/>
<dbReference type="EMBL" id="CP001581">
    <property type="protein sequence ID" value="ACO85560.1"/>
    <property type="molecule type" value="Genomic_DNA"/>
</dbReference>
<dbReference type="RefSeq" id="WP_004440432.1">
    <property type="nucleotide sequence ID" value="NC_012563.1"/>
</dbReference>
<dbReference type="SMR" id="C1FS53"/>
<dbReference type="KEGG" id="cby:CLM_2705"/>
<dbReference type="eggNOG" id="COG1185">
    <property type="taxonomic scope" value="Bacteria"/>
</dbReference>
<dbReference type="HOGENOM" id="CLU_004217_2_2_9"/>
<dbReference type="Proteomes" id="UP000001374">
    <property type="component" value="Chromosome"/>
</dbReference>
<dbReference type="GO" id="GO:0005829">
    <property type="term" value="C:cytosol"/>
    <property type="evidence" value="ECO:0007669"/>
    <property type="project" value="TreeGrafter"/>
</dbReference>
<dbReference type="GO" id="GO:0000175">
    <property type="term" value="F:3'-5'-RNA exonuclease activity"/>
    <property type="evidence" value="ECO:0007669"/>
    <property type="project" value="TreeGrafter"/>
</dbReference>
<dbReference type="GO" id="GO:0000287">
    <property type="term" value="F:magnesium ion binding"/>
    <property type="evidence" value="ECO:0007669"/>
    <property type="project" value="UniProtKB-UniRule"/>
</dbReference>
<dbReference type="GO" id="GO:0004654">
    <property type="term" value="F:polyribonucleotide nucleotidyltransferase activity"/>
    <property type="evidence" value="ECO:0007669"/>
    <property type="project" value="UniProtKB-UniRule"/>
</dbReference>
<dbReference type="GO" id="GO:0003723">
    <property type="term" value="F:RNA binding"/>
    <property type="evidence" value="ECO:0007669"/>
    <property type="project" value="UniProtKB-UniRule"/>
</dbReference>
<dbReference type="GO" id="GO:0006402">
    <property type="term" value="P:mRNA catabolic process"/>
    <property type="evidence" value="ECO:0007669"/>
    <property type="project" value="UniProtKB-UniRule"/>
</dbReference>
<dbReference type="GO" id="GO:0006396">
    <property type="term" value="P:RNA processing"/>
    <property type="evidence" value="ECO:0007669"/>
    <property type="project" value="InterPro"/>
</dbReference>
<dbReference type="CDD" id="cd02393">
    <property type="entry name" value="KH-I_PNPase"/>
    <property type="match status" value="1"/>
</dbReference>
<dbReference type="CDD" id="cd11363">
    <property type="entry name" value="RNase_PH_PNPase_1"/>
    <property type="match status" value="1"/>
</dbReference>
<dbReference type="CDD" id="cd11364">
    <property type="entry name" value="RNase_PH_PNPase_2"/>
    <property type="match status" value="1"/>
</dbReference>
<dbReference type="CDD" id="cd04472">
    <property type="entry name" value="S1_PNPase"/>
    <property type="match status" value="1"/>
</dbReference>
<dbReference type="FunFam" id="2.40.50.140:FF:000023">
    <property type="entry name" value="Polyribonucleotide nucleotidyltransferase"/>
    <property type="match status" value="1"/>
</dbReference>
<dbReference type="FunFam" id="3.30.1370.10:FF:000001">
    <property type="entry name" value="Polyribonucleotide nucleotidyltransferase"/>
    <property type="match status" value="1"/>
</dbReference>
<dbReference type="FunFam" id="3.30.230.70:FF:000001">
    <property type="entry name" value="Polyribonucleotide nucleotidyltransferase"/>
    <property type="match status" value="1"/>
</dbReference>
<dbReference type="FunFam" id="3.30.230.70:FF:000002">
    <property type="entry name" value="Polyribonucleotide nucleotidyltransferase"/>
    <property type="match status" value="1"/>
</dbReference>
<dbReference type="Gene3D" id="3.30.230.70">
    <property type="entry name" value="GHMP Kinase, N-terminal domain"/>
    <property type="match status" value="2"/>
</dbReference>
<dbReference type="Gene3D" id="3.30.1370.10">
    <property type="entry name" value="K Homology domain, type 1"/>
    <property type="match status" value="1"/>
</dbReference>
<dbReference type="Gene3D" id="2.40.50.140">
    <property type="entry name" value="Nucleic acid-binding proteins"/>
    <property type="match status" value="1"/>
</dbReference>
<dbReference type="HAMAP" id="MF_01595">
    <property type="entry name" value="PNPase"/>
    <property type="match status" value="1"/>
</dbReference>
<dbReference type="InterPro" id="IPR001247">
    <property type="entry name" value="ExoRNase_PH_dom1"/>
</dbReference>
<dbReference type="InterPro" id="IPR015847">
    <property type="entry name" value="ExoRNase_PH_dom2"/>
</dbReference>
<dbReference type="InterPro" id="IPR036345">
    <property type="entry name" value="ExoRNase_PH_dom2_sf"/>
</dbReference>
<dbReference type="InterPro" id="IPR004087">
    <property type="entry name" value="KH_dom"/>
</dbReference>
<dbReference type="InterPro" id="IPR004088">
    <property type="entry name" value="KH_dom_type_1"/>
</dbReference>
<dbReference type="InterPro" id="IPR036612">
    <property type="entry name" value="KH_dom_type_1_sf"/>
</dbReference>
<dbReference type="InterPro" id="IPR012340">
    <property type="entry name" value="NA-bd_OB-fold"/>
</dbReference>
<dbReference type="InterPro" id="IPR012162">
    <property type="entry name" value="PNPase"/>
</dbReference>
<dbReference type="InterPro" id="IPR027408">
    <property type="entry name" value="PNPase/RNase_PH_dom_sf"/>
</dbReference>
<dbReference type="InterPro" id="IPR015848">
    <property type="entry name" value="PNPase_PH_RNA-bd_bac/org-type"/>
</dbReference>
<dbReference type="InterPro" id="IPR036456">
    <property type="entry name" value="PNPase_PH_RNA-bd_sf"/>
</dbReference>
<dbReference type="InterPro" id="IPR020568">
    <property type="entry name" value="Ribosomal_Su5_D2-typ_SF"/>
</dbReference>
<dbReference type="InterPro" id="IPR003029">
    <property type="entry name" value="S1_domain"/>
</dbReference>
<dbReference type="NCBIfam" id="TIGR03591">
    <property type="entry name" value="polynuc_phos"/>
    <property type="match status" value="1"/>
</dbReference>
<dbReference type="NCBIfam" id="NF008805">
    <property type="entry name" value="PRK11824.1"/>
    <property type="match status" value="1"/>
</dbReference>
<dbReference type="PANTHER" id="PTHR11252">
    <property type="entry name" value="POLYRIBONUCLEOTIDE NUCLEOTIDYLTRANSFERASE"/>
    <property type="match status" value="1"/>
</dbReference>
<dbReference type="PANTHER" id="PTHR11252:SF0">
    <property type="entry name" value="POLYRIBONUCLEOTIDE NUCLEOTIDYLTRANSFERASE 1, MITOCHONDRIAL"/>
    <property type="match status" value="1"/>
</dbReference>
<dbReference type="Pfam" id="PF00013">
    <property type="entry name" value="KH_1"/>
    <property type="match status" value="1"/>
</dbReference>
<dbReference type="Pfam" id="PF03726">
    <property type="entry name" value="PNPase"/>
    <property type="match status" value="1"/>
</dbReference>
<dbReference type="Pfam" id="PF01138">
    <property type="entry name" value="RNase_PH"/>
    <property type="match status" value="2"/>
</dbReference>
<dbReference type="Pfam" id="PF03725">
    <property type="entry name" value="RNase_PH_C"/>
    <property type="match status" value="1"/>
</dbReference>
<dbReference type="Pfam" id="PF00575">
    <property type="entry name" value="S1"/>
    <property type="match status" value="1"/>
</dbReference>
<dbReference type="PIRSF" id="PIRSF005499">
    <property type="entry name" value="PNPase"/>
    <property type="match status" value="1"/>
</dbReference>
<dbReference type="SMART" id="SM00322">
    <property type="entry name" value="KH"/>
    <property type="match status" value="1"/>
</dbReference>
<dbReference type="SMART" id="SM00316">
    <property type="entry name" value="S1"/>
    <property type="match status" value="1"/>
</dbReference>
<dbReference type="SUPFAM" id="SSF54791">
    <property type="entry name" value="Eukaryotic type KH-domain (KH-domain type I)"/>
    <property type="match status" value="1"/>
</dbReference>
<dbReference type="SUPFAM" id="SSF50249">
    <property type="entry name" value="Nucleic acid-binding proteins"/>
    <property type="match status" value="1"/>
</dbReference>
<dbReference type="SUPFAM" id="SSF46915">
    <property type="entry name" value="Polynucleotide phosphorylase/guanosine pentaphosphate synthase (PNPase/GPSI), domain 3"/>
    <property type="match status" value="1"/>
</dbReference>
<dbReference type="SUPFAM" id="SSF55666">
    <property type="entry name" value="Ribonuclease PH domain 2-like"/>
    <property type="match status" value="2"/>
</dbReference>
<dbReference type="SUPFAM" id="SSF54211">
    <property type="entry name" value="Ribosomal protein S5 domain 2-like"/>
    <property type="match status" value="2"/>
</dbReference>
<dbReference type="PROSITE" id="PS50084">
    <property type="entry name" value="KH_TYPE_1"/>
    <property type="match status" value="1"/>
</dbReference>
<dbReference type="PROSITE" id="PS50126">
    <property type="entry name" value="S1"/>
    <property type="match status" value="1"/>
</dbReference>
<keyword id="KW-0963">Cytoplasm</keyword>
<keyword id="KW-0460">Magnesium</keyword>
<keyword id="KW-0479">Metal-binding</keyword>
<keyword id="KW-0548">Nucleotidyltransferase</keyword>
<keyword id="KW-0694">RNA-binding</keyword>
<keyword id="KW-0808">Transferase</keyword>
<organism>
    <name type="scientific">Clostridium botulinum (strain Kyoto / Type A2)</name>
    <dbReference type="NCBI Taxonomy" id="536232"/>
    <lineage>
        <taxon>Bacteria</taxon>
        <taxon>Bacillati</taxon>
        <taxon>Bacillota</taxon>
        <taxon>Clostridia</taxon>
        <taxon>Eubacteriales</taxon>
        <taxon>Clostridiaceae</taxon>
        <taxon>Clostridium</taxon>
    </lineage>
</organism>
<comment type="function">
    <text evidence="1">Involved in mRNA degradation. Catalyzes the phosphorolysis of single-stranded polyribonucleotides processively in the 3'- to 5'-direction.</text>
</comment>
<comment type="catalytic activity">
    <reaction evidence="1">
        <text>RNA(n+1) + phosphate = RNA(n) + a ribonucleoside 5'-diphosphate</text>
        <dbReference type="Rhea" id="RHEA:22096"/>
        <dbReference type="Rhea" id="RHEA-COMP:14527"/>
        <dbReference type="Rhea" id="RHEA-COMP:17342"/>
        <dbReference type="ChEBI" id="CHEBI:43474"/>
        <dbReference type="ChEBI" id="CHEBI:57930"/>
        <dbReference type="ChEBI" id="CHEBI:140395"/>
        <dbReference type="EC" id="2.7.7.8"/>
    </reaction>
</comment>
<comment type="cofactor">
    <cofactor evidence="1">
        <name>Mg(2+)</name>
        <dbReference type="ChEBI" id="CHEBI:18420"/>
    </cofactor>
</comment>
<comment type="subcellular location">
    <subcellularLocation>
        <location evidence="1">Cytoplasm</location>
    </subcellularLocation>
</comment>
<comment type="similarity">
    <text evidence="1">Belongs to the polyribonucleotide nucleotidyltransferase family.</text>
</comment>
<evidence type="ECO:0000255" key="1">
    <source>
        <dbReference type="HAMAP-Rule" id="MF_01595"/>
    </source>
</evidence>